<proteinExistence type="inferred from homology"/>
<sequence length="370" mass="39403">MSNPRPNPGIEAIHPYIGGESKLPGVEQVIKLSSNEGAFGPPPAAQQAYLKAVSSLHRYPDGGSHALREAIGRYFGLDPARIVCGVGSDEMIAHLCMAYSNPDSELIMSVHGFSVYEMYGHYAGAKVVKVPEQALTTDVDALLDAITPRTKVVCIANPNNPTGTMLPTAEIARLRASLPSDVLLVLDAAYAEYVDDPDYDPGVKLVDAGDNTVMTRTFSKIFGLGGLRLGWAYAPPAIVDVLNRVRGPFTVNAAVQEAAIGALEEPGWVERSRAHNSAARAKLATALFDIGIPTLPSVTNFLLADFGSEARAGAADRWLRTRGLIVRRVASYGLPAYLRITIGTNEECDLVAEALRAFMAQAPADSDAAS</sequence>
<comment type="catalytic activity">
    <reaction evidence="1">
        <text>L-histidinol phosphate + 2-oxoglutarate = 3-(imidazol-4-yl)-2-oxopropyl phosphate + L-glutamate</text>
        <dbReference type="Rhea" id="RHEA:23744"/>
        <dbReference type="ChEBI" id="CHEBI:16810"/>
        <dbReference type="ChEBI" id="CHEBI:29985"/>
        <dbReference type="ChEBI" id="CHEBI:57766"/>
        <dbReference type="ChEBI" id="CHEBI:57980"/>
        <dbReference type="EC" id="2.6.1.9"/>
    </reaction>
</comment>
<comment type="cofactor">
    <cofactor evidence="1">
        <name>pyridoxal 5'-phosphate</name>
        <dbReference type="ChEBI" id="CHEBI:597326"/>
    </cofactor>
</comment>
<comment type="pathway">
    <text evidence="1">Amino-acid biosynthesis; L-histidine biosynthesis; L-histidine from 5-phospho-alpha-D-ribose 1-diphosphate: step 7/9.</text>
</comment>
<comment type="subunit">
    <text evidence="1">Homodimer.</text>
</comment>
<comment type="similarity">
    <text evidence="1">Belongs to the class-II pyridoxal-phosphate-dependent aminotransferase family. Histidinol-phosphate aminotransferase subfamily.</text>
</comment>
<dbReference type="EC" id="2.6.1.9" evidence="1"/>
<dbReference type="EMBL" id="CP000394">
    <property type="protein sequence ID" value="ABI61038.1"/>
    <property type="molecule type" value="Genomic_DNA"/>
</dbReference>
<dbReference type="RefSeq" id="WP_011630848.1">
    <property type="nucleotide sequence ID" value="NC_008343.2"/>
</dbReference>
<dbReference type="SMR" id="Q0BVW4"/>
<dbReference type="STRING" id="391165.GbCGDNIH1_0140"/>
<dbReference type="KEGG" id="gbe:GbCGDNIH1_0140"/>
<dbReference type="eggNOG" id="COG0079">
    <property type="taxonomic scope" value="Bacteria"/>
</dbReference>
<dbReference type="HOGENOM" id="CLU_017584_3_3_5"/>
<dbReference type="OrthoDB" id="9809616at2"/>
<dbReference type="UniPathway" id="UPA00031">
    <property type="reaction ID" value="UER00012"/>
</dbReference>
<dbReference type="Proteomes" id="UP000001963">
    <property type="component" value="Chromosome"/>
</dbReference>
<dbReference type="GO" id="GO:0004400">
    <property type="term" value="F:histidinol-phosphate transaminase activity"/>
    <property type="evidence" value="ECO:0007669"/>
    <property type="project" value="UniProtKB-UniRule"/>
</dbReference>
<dbReference type="GO" id="GO:0030170">
    <property type="term" value="F:pyridoxal phosphate binding"/>
    <property type="evidence" value="ECO:0007669"/>
    <property type="project" value="InterPro"/>
</dbReference>
<dbReference type="GO" id="GO:0000105">
    <property type="term" value="P:L-histidine biosynthetic process"/>
    <property type="evidence" value="ECO:0007669"/>
    <property type="project" value="UniProtKB-UniRule"/>
</dbReference>
<dbReference type="CDD" id="cd00609">
    <property type="entry name" value="AAT_like"/>
    <property type="match status" value="1"/>
</dbReference>
<dbReference type="Gene3D" id="3.90.1150.10">
    <property type="entry name" value="Aspartate Aminotransferase, domain 1"/>
    <property type="match status" value="1"/>
</dbReference>
<dbReference type="Gene3D" id="3.40.640.10">
    <property type="entry name" value="Type I PLP-dependent aspartate aminotransferase-like (Major domain)"/>
    <property type="match status" value="1"/>
</dbReference>
<dbReference type="HAMAP" id="MF_01023">
    <property type="entry name" value="HisC_aminotrans_2"/>
    <property type="match status" value="1"/>
</dbReference>
<dbReference type="InterPro" id="IPR004839">
    <property type="entry name" value="Aminotransferase_I/II_large"/>
</dbReference>
<dbReference type="InterPro" id="IPR005861">
    <property type="entry name" value="HisP_aminotrans"/>
</dbReference>
<dbReference type="InterPro" id="IPR050106">
    <property type="entry name" value="HistidinolP_aminotransfase"/>
</dbReference>
<dbReference type="InterPro" id="IPR015424">
    <property type="entry name" value="PyrdxlP-dep_Trfase"/>
</dbReference>
<dbReference type="InterPro" id="IPR015421">
    <property type="entry name" value="PyrdxlP-dep_Trfase_major"/>
</dbReference>
<dbReference type="InterPro" id="IPR015422">
    <property type="entry name" value="PyrdxlP-dep_Trfase_small"/>
</dbReference>
<dbReference type="NCBIfam" id="TIGR01141">
    <property type="entry name" value="hisC"/>
    <property type="match status" value="1"/>
</dbReference>
<dbReference type="PANTHER" id="PTHR43643:SF3">
    <property type="entry name" value="HISTIDINOL-PHOSPHATE AMINOTRANSFERASE"/>
    <property type="match status" value="1"/>
</dbReference>
<dbReference type="PANTHER" id="PTHR43643">
    <property type="entry name" value="HISTIDINOL-PHOSPHATE AMINOTRANSFERASE 2"/>
    <property type="match status" value="1"/>
</dbReference>
<dbReference type="Pfam" id="PF00155">
    <property type="entry name" value="Aminotran_1_2"/>
    <property type="match status" value="1"/>
</dbReference>
<dbReference type="SUPFAM" id="SSF53383">
    <property type="entry name" value="PLP-dependent transferases"/>
    <property type="match status" value="1"/>
</dbReference>
<protein>
    <recommendedName>
        <fullName evidence="1">Histidinol-phosphate aminotransferase</fullName>
        <ecNumber evidence="1">2.6.1.9</ecNumber>
    </recommendedName>
    <alternativeName>
        <fullName evidence="1">Imidazole acetol-phosphate transaminase</fullName>
    </alternativeName>
</protein>
<gene>
    <name evidence="1" type="primary">hisC</name>
    <name type="ordered locus">GbCGDNIH1_0140</name>
</gene>
<evidence type="ECO:0000255" key="1">
    <source>
        <dbReference type="HAMAP-Rule" id="MF_01023"/>
    </source>
</evidence>
<reference key="1">
    <citation type="journal article" date="2007" name="J. Bacteriol.">
        <title>Genome sequence analysis of the emerging human pathogenic acetic acid bacterium Granulibacter bethesdensis.</title>
        <authorList>
            <person name="Greenberg D.E."/>
            <person name="Porcella S.F."/>
            <person name="Zelazny A.M."/>
            <person name="Virtaneva K."/>
            <person name="Sturdevant D.E."/>
            <person name="Kupko J.J. III"/>
            <person name="Barbian K.D."/>
            <person name="Babar A."/>
            <person name="Dorward D.W."/>
            <person name="Holland S.M."/>
        </authorList>
    </citation>
    <scope>NUCLEOTIDE SEQUENCE [LARGE SCALE GENOMIC DNA]</scope>
    <source>
        <strain>ATCC BAA-1260 / CGDNIH1</strain>
    </source>
</reference>
<name>HIS8_GRABC</name>
<organism>
    <name type="scientific">Granulibacter bethesdensis (strain ATCC BAA-1260 / CGDNIH1)</name>
    <dbReference type="NCBI Taxonomy" id="391165"/>
    <lineage>
        <taxon>Bacteria</taxon>
        <taxon>Pseudomonadati</taxon>
        <taxon>Pseudomonadota</taxon>
        <taxon>Alphaproteobacteria</taxon>
        <taxon>Acetobacterales</taxon>
        <taxon>Acetobacteraceae</taxon>
        <taxon>Granulibacter</taxon>
    </lineage>
</organism>
<accession>Q0BVW4</accession>
<keyword id="KW-0028">Amino-acid biosynthesis</keyword>
<keyword id="KW-0032">Aminotransferase</keyword>
<keyword id="KW-0368">Histidine biosynthesis</keyword>
<keyword id="KW-0663">Pyridoxal phosphate</keyword>
<keyword id="KW-1185">Reference proteome</keyword>
<keyword id="KW-0808">Transferase</keyword>
<feature type="chain" id="PRO_0000319761" description="Histidinol-phosphate aminotransferase">
    <location>
        <begin position="1"/>
        <end position="370"/>
    </location>
</feature>
<feature type="modified residue" description="N6-(pyridoxal phosphate)lysine" evidence="1">
    <location>
        <position position="220"/>
    </location>
</feature>